<protein>
    <recommendedName>
        <fullName>Natural resistance-associated macrophage protein 2</fullName>
        <shortName>NRAMP 2</shortName>
    </recommendedName>
    <alternativeName>
        <fullName>Divalent cation transporter 1</fullName>
    </alternativeName>
    <alternativeName>
        <fullName>Divalent metal transporter 1</fullName>
        <shortName>DMT-1</shortName>
    </alternativeName>
    <alternativeName>
        <fullName>Solute carrier family 11 member 2</fullName>
    </alternativeName>
</protein>
<reference key="1">
    <citation type="journal article" date="1997" name="Nature">
        <title>Cloning and characterization of a mammalian proton-coupled metal-ion transporter.</title>
        <authorList>
            <person name="Gunshin H."/>
            <person name="Mackenzie B."/>
            <person name="Berger U.V."/>
            <person name="Gunshin Y."/>
            <person name="Romero M.F."/>
            <person name="Boron W.F."/>
            <person name="Nussberger S."/>
            <person name="Gollan J.L."/>
            <person name="Hediger M.A."/>
        </authorList>
    </citation>
    <scope>NUCLEOTIDE SEQUENCE [MRNA] (ISOFORM 2)</scope>
    <scope>FUNCTION</scope>
    <scope>TRANSPORT ACTIVITY (ISOFORM 2)</scope>
    <scope>TISSUE SPECIFICITY (ISOFORM 2)</scope>
    <scope>INDUCTION (ISOFORM 2)</scope>
    <scope>CAUTION</scope>
    <source>
        <strain>Sprague-Dawley</strain>
    </source>
</reference>
<reference key="2">
    <citation type="submission" date="1997-10" db="EMBL/GenBank/DDBJ databases">
        <title>Rat natural resistance associated macrophage protein-2 (Nramp2), C-terminal exon alternative splice variant.</title>
        <authorList>
            <person name="Fleming M.D."/>
            <person name="Romano M.A."/>
            <person name="Su M.A."/>
            <person name="Garrick L.M."/>
            <person name="Garrick M.D."/>
            <person name="Andrews N.C."/>
        </authorList>
    </citation>
    <scope>NUCLEOTIDE SEQUENCE [MRNA] (ISOFORM 2)</scope>
    <source>
        <tissue>Cerebellum</tissue>
    </source>
</reference>
<reference key="3">
    <citation type="journal article" date="2012" name="Nat. Commun.">
        <title>Quantitative maps of protein phosphorylation sites across 14 different rat organs and tissues.</title>
        <authorList>
            <person name="Lundby A."/>
            <person name="Secher A."/>
            <person name="Lage K."/>
            <person name="Nordsborg N.B."/>
            <person name="Dmytriyev A."/>
            <person name="Lundby C."/>
            <person name="Olsen J.V."/>
        </authorList>
    </citation>
    <scope>PHOSPHORYLATION [LARGE SCALE ANALYSIS] AT SER-556 (ISOFORM 1)</scope>
    <scope>IDENTIFICATION BY MASS SPECTROMETRY [LARGE SCALE ANALYSIS]</scope>
</reference>
<reference key="4">
    <citation type="journal article" date="1998" name="Proc. Natl. Acad. Sci. U.S.A.">
        <title>Nramp2 is mutated in the anemic Belgrade (b) rat: evidence of a role for Nramp2 in endosomal iron transport.</title>
        <authorList>
            <person name="Fleming M.D."/>
            <person name="Romano M.A."/>
            <person name="Su M.A."/>
            <person name="Garrick L.M."/>
            <person name="Garrick M.D."/>
            <person name="Andrews N.C."/>
        </authorList>
    </citation>
    <scope>VARIANT B ARG-185</scope>
</reference>
<reference key="5">
    <citation type="journal article" date="2006" name="Pflugers Arch.">
        <title>Divalent metal-ion transporter DMT1 mediates both H+ -coupled Fe2+ transport and uncoupled fluxes.</title>
        <authorList>
            <person name="Mackenzie B."/>
            <person name="Ujwal M.L."/>
            <person name="Chang M.H."/>
            <person name="Romero M.F."/>
            <person name="Hediger M.A."/>
        </authorList>
    </citation>
    <scope>FUNCTION</scope>
    <scope>TRANSPORT ACTIVITY (ISOFORM 2)</scope>
    <scope>BIOPHYSICOCHEMICAL PROPERTIES (ISOFORM 2)</scope>
    <scope>REACTION MECHANISM</scope>
    <scope>MUTAGENESIS OF HIS-267 AND HIS-272</scope>
</reference>
<reference key="6">
    <citation type="journal article" date="2014" name="FASEB J.">
        <title>Evidence for mitochondrial localization of divalent metal transporter 1 (DMT1).</title>
        <authorList>
            <person name="Wolff N.A."/>
            <person name="Ghio A.J."/>
            <person name="Garrick L.M."/>
            <person name="Garrick M.D."/>
            <person name="Zhao L."/>
            <person name="Fenton R.A."/>
            <person name="Thevenod F."/>
        </authorList>
    </citation>
    <scope>SUBCELLULAR LOCATION</scope>
</reference>
<reference key="7">
    <citation type="journal article" date="2018" name="Sci. Rep.">
        <title>A role for divalent metal transporter (DMT1) in mitochondrial uptake of iron and manganese.</title>
        <authorList>
            <person name="Wolff N.A."/>
            <person name="Garrick M.D."/>
            <person name="Zhao L."/>
            <person name="Garrick L.M."/>
            <person name="Ghio A.J."/>
            <person name="Thevenod F."/>
        </authorList>
    </citation>
    <scope>FUNCTION</scope>
    <scope>TRANSPORT ACTIVITY (ISOFORM 2)</scope>
    <scope>ACTIVITY REGULATION</scope>
    <scope>BIOPHYSICOCHEMICAL PROPERTIES</scope>
    <scope>CHARACTERIZATION OF VARIANT B ARG-185</scope>
</reference>
<feature type="chain" id="PRO_0000212596" description="Natural resistance-associated macrophage protein 2">
    <location>
        <begin position="1"/>
        <end position="568"/>
    </location>
</feature>
<feature type="topological domain" description="Cytoplasmic" evidence="3">
    <location>
        <begin position="1"/>
        <end position="69"/>
    </location>
</feature>
<feature type="transmembrane region" description="Helical" evidence="3">
    <location>
        <begin position="70"/>
        <end position="90"/>
    </location>
</feature>
<feature type="topological domain" description="Extracellular" evidence="3">
    <location>
        <begin position="91"/>
        <end position="95"/>
    </location>
</feature>
<feature type="transmembrane region" description="Helical" evidence="3">
    <location>
        <begin position="96"/>
        <end position="117"/>
    </location>
</feature>
<feature type="topological domain" description="Cytoplasmic" evidence="3">
    <location>
        <begin position="118"/>
        <end position="154"/>
    </location>
</feature>
<feature type="transmembrane region" description="Helical" evidence="3">
    <location>
        <begin position="155"/>
        <end position="175"/>
    </location>
</feature>
<feature type="topological domain" description="Extracellular" evidence="3">
    <location>
        <begin position="176"/>
        <end position="179"/>
    </location>
</feature>
<feature type="transmembrane region" description="Helical" evidence="3">
    <location>
        <begin position="180"/>
        <end position="194"/>
    </location>
</feature>
<feature type="topological domain" description="Cytoplasmic" evidence="3">
    <location>
        <begin position="195"/>
        <end position="208"/>
    </location>
</feature>
<feature type="transmembrane region" description="Helical" evidence="3">
    <location>
        <begin position="209"/>
        <end position="229"/>
    </location>
</feature>
<feature type="topological domain" description="Extracellular" evidence="3">
    <location>
        <begin position="230"/>
        <end position="255"/>
    </location>
</feature>
<feature type="transmembrane region" description="Helical" evidence="3">
    <location>
        <begin position="256"/>
        <end position="276"/>
    </location>
</feature>
<feature type="topological domain" description="Cytoplasmic" evidence="3">
    <location>
        <begin position="277"/>
        <end position="301"/>
    </location>
</feature>
<feature type="transmembrane region" description="Helical" evidence="3">
    <location>
        <begin position="302"/>
        <end position="322"/>
    </location>
</feature>
<feature type="topological domain" description="Extracellular" evidence="3">
    <location>
        <begin position="323"/>
        <end position="360"/>
    </location>
</feature>
<feature type="transmembrane region" description="Helical" evidence="3">
    <location>
        <begin position="361"/>
        <end position="381"/>
    </location>
</feature>
<feature type="topological domain" description="Cytoplasmic" evidence="3">
    <location>
        <begin position="382"/>
        <end position="408"/>
    </location>
</feature>
<feature type="transmembrane region" description="Helical" evidence="3">
    <location>
        <begin position="409"/>
        <end position="429"/>
    </location>
</feature>
<feature type="topological domain" description="Extracellular" evidence="3">
    <location>
        <begin position="430"/>
        <end position="440"/>
    </location>
</feature>
<feature type="transmembrane region" description="Helical" evidence="3">
    <location>
        <begin position="441"/>
        <end position="461"/>
    </location>
</feature>
<feature type="topological domain" description="Cytoplasmic" evidence="3">
    <location>
        <begin position="462"/>
        <end position="482"/>
    </location>
</feature>
<feature type="transmembrane region" description="Helical" evidence="3">
    <location>
        <begin position="483"/>
        <end position="503"/>
    </location>
</feature>
<feature type="topological domain" description="Extracellular" evidence="3">
    <location>
        <begin position="504"/>
        <end position="506"/>
    </location>
</feature>
<feature type="transmembrane region" description="Helical" evidence="3">
    <location>
        <begin position="507"/>
        <end position="527"/>
    </location>
</feature>
<feature type="topological domain" description="Cytoplasmic" evidence="3">
    <location>
        <begin position="528"/>
        <end position="568"/>
    </location>
</feature>
<feature type="region of interest" description="Disordered" evidence="4">
    <location>
        <begin position="1"/>
        <end position="45"/>
    </location>
</feature>
<feature type="region of interest" description="Required for early endosome targeting" evidence="1">
    <location>
        <begin position="555"/>
        <end position="559"/>
    </location>
</feature>
<feature type="compositionally biased region" description="Basic and acidic residues" evidence="4">
    <location>
        <begin position="1"/>
        <end position="20"/>
    </location>
</feature>
<feature type="compositionally biased region" description="Polar residues" evidence="4">
    <location>
        <begin position="30"/>
        <end position="40"/>
    </location>
</feature>
<feature type="modified residue" description="Phosphoserine" evidence="2">
    <location>
        <position position="564"/>
    </location>
</feature>
<feature type="modified residue" description="Phosphoserine" evidence="2">
    <location>
        <position position="567"/>
    </location>
</feature>
<feature type="glycosylation site" description="N-linked (GlcNAc...) asparagine" evidence="3">
    <location>
        <position position="336"/>
    </location>
</feature>
<feature type="glycosylation site" description="N-linked (GlcNAc...) asparagine" evidence="3">
    <location>
        <position position="349"/>
    </location>
</feature>
<feature type="splice variant" id="VSP_003597" description="In isoform 1." evidence="10">
    <original>YHLGLTARPEIYLLNTVDAVSLVSR</original>
    <variation>VSISKVLLSEDTSGGNTK</variation>
    <location>
        <begin position="544"/>
        <end position="568"/>
    </location>
</feature>
<feature type="sequence variant" description="In microcytic anemia; impairs metal ion transport." evidence="7 9">
    <original>G</original>
    <variation>R</variation>
    <location>
        <position position="185"/>
    </location>
</feature>
<feature type="mutagenesis site" description="Reduces expression at the plasma membrane. Does not affect H(+)-coupled Fe(2+) transport." evidence="5">
    <original>H</original>
    <variation>A</variation>
    <location>
        <position position="267"/>
    </location>
</feature>
<feature type="mutagenesis site" description="Impairs expression at the plasma membrane." evidence="5">
    <original>H</original>
    <variation>D</variation>
    <variation>N</variation>
    <location>
        <position position="267"/>
    </location>
</feature>
<feature type="mutagenesis site" description="Uncouples Fe(2+) and H(+) fluxes. Mediates facilitative Fe(2+) transport independently of pH gradient." evidence="5">
    <original>H</original>
    <variation>A</variation>
    <location>
        <position position="272"/>
    </location>
</feature>
<feature type="mutagenesis site" description="Loss of proton-coupled Fe(2+) transporter activity." evidence="5">
    <original>H</original>
    <variation>R</variation>
    <location>
        <position position="272"/>
    </location>
</feature>
<feature type="modified residue" description="Phosphoserine" evidence="15">
    <location sequence="O54902-2">
        <position position="556"/>
    </location>
</feature>
<evidence type="ECO:0000250" key="1">
    <source>
        <dbReference type="UniProtKB" id="P49281"/>
    </source>
</evidence>
<evidence type="ECO:0000250" key="2">
    <source>
        <dbReference type="UniProtKB" id="P49282"/>
    </source>
</evidence>
<evidence type="ECO:0000255" key="3"/>
<evidence type="ECO:0000256" key="4">
    <source>
        <dbReference type="SAM" id="MobiDB-lite"/>
    </source>
</evidence>
<evidence type="ECO:0000269" key="5">
    <source>
    </source>
</evidence>
<evidence type="ECO:0000269" key="6">
    <source>
    </source>
</evidence>
<evidence type="ECO:0000269" key="7">
    <source>
    </source>
</evidence>
<evidence type="ECO:0000269" key="8">
    <source>
    </source>
</evidence>
<evidence type="ECO:0000269" key="9">
    <source>
    </source>
</evidence>
<evidence type="ECO:0000303" key="10">
    <source>
    </source>
</evidence>
<evidence type="ECO:0000305" key="11"/>
<evidence type="ECO:0000305" key="12">
    <source>
    </source>
</evidence>
<evidence type="ECO:0000305" key="13">
    <source>
    </source>
</evidence>
<evidence type="ECO:0000305" key="14">
    <source>
    </source>
</evidence>
<evidence type="ECO:0007744" key="15">
    <source>
    </source>
</evidence>
<gene>
    <name type="primary">Slc11a2</name>
    <name evidence="10" type="synonym">Dct1</name>
    <name type="synonym">Dmt1</name>
    <name type="synonym">Nramp2</name>
</gene>
<dbReference type="EMBL" id="AF008439">
    <property type="protein sequence ID" value="AAC53319.1"/>
    <property type="molecule type" value="mRNA"/>
</dbReference>
<dbReference type="EMBL" id="AF029757">
    <property type="protein sequence ID" value="AAC24495.1"/>
    <property type="molecule type" value="mRNA"/>
</dbReference>
<dbReference type="RefSeq" id="NP_037305.2">
    <property type="nucleotide sequence ID" value="NM_013173.2"/>
</dbReference>
<dbReference type="SMR" id="O54902"/>
<dbReference type="BioGRID" id="247744">
    <property type="interactions" value="1"/>
</dbReference>
<dbReference type="FunCoup" id="O54902">
    <property type="interactions" value="2778"/>
</dbReference>
<dbReference type="STRING" id="10116.ENSRNOP00000026531"/>
<dbReference type="TCDB" id="2.A.55.2.2">
    <property type="family name" value="the metal ion (mn(2+)-iron) transporter (nramp) family"/>
</dbReference>
<dbReference type="GlyCosmos" id="O54902">
    <property type="glycosylation" value="2 sites, No reported glycans"/>
</dbReference>
<dbReference type="GlyGen" id="O54902">
    <property type="glycosylation" value="2 sites"/>
</dbReference>
<dbReference type="iPTMnet" id="O54902"/>
<dbReference type="PhosphoSitePlus" id="O54902"/>
<dbReference type="jPOST" id="O54902"/>
<dbReference type="PaxDb" id="10116-ENSRNOP00000026531"/>
<dbReference type="GeneID" id="25715"/>
<dbReference type="KEGG" id="rno:25715"/>
<dbReference type="UCSC" id="RGD:3684">
    <molecule id="O54902-1"/>
    <property type="organism name" value="rat"/>
</dbReference>
<dbReference type="AGR" id="RGD:3684"/>
<dbReference type="CTD" id="4891"/>
<dbReference type="RGD" id="3684">
    <property type="gene designation" value="Slc11a2"/>
</dbReference>
<dbReference type="eggNOG" id="KOG1291">
    <property type="taxonomic scope" value="Eukaryota"/>
</dbReference>
<dbReference type="InParanoid" id="O54902"/>
<dbReference type="PhylomeDB" id="O54902"/>
<dbReference type="Reactome" id="R-RNO-425410">
    <property type="pathway name" value="Metal ion SLC transporters"/>
</dbReference>
<dbReference type="Reactome" id="R-RNO-917937">
    <property type="pathway name" value="Iron uptake and transport"/>
</dbReference>
<dbReference type="PRO" id="PR:O54902"/>
<dbReference type="Proteomes" id="UP000002494">
    <property type="component" value="Unplaced"/>
</dbReference>
<dbReference type="GO" id="GO:0045177">
    <property type="term" value="C:apical part of cell"/>
    <property type="evidence" value="ECO:0000314"/>
    <property type="project" value="RGD"/>
</dbReference>
<dbReference type="GO" id="GO:0016324">
    <property type="term" value="C:apical plasma membrane"/>
    <property type="evidence" value="ECO:0000266"/>
    <property type="project" value="RGD"/>
</dbReference>
<dbReference type="GO" id="GO:0045178">
    <property type="term" value="C:basal part of cell"/>
    <property type="evidence" value="ECO:0000266"/>
    <property type="project" value="RGD"/>
</dbReference>
<dbReference type="GO" id="GO:0031526">
    <property type="term" value="C:brush border membrane"/>
    <property type="evidence" value="ECO:0000266"/>
    <property type="project" value="RGD"/>
</dbReference>
<dbReference type="GO" id="GO:0005737">
    <property type="term" value="C:cytoplasm"/>
    <property type="evidence" value="ECO:0000266"/>
    <property type="project" value="RGD"/>
</dbReference>
<dbReference type="GO" id="GO:0031410">
    <property type="term" value="C:cytoplasmic vesicle"/>
    <property type="evidence" value="ECO:0000266"/>
    <property type="project" value="RGD"/>
</dbReference>
<dbReference type="GO" id="GO:0005769">
    <property type="term" value="C:early endosome"/>
    <property type="evidence" value="ECO:0000250"/>
    <property type="project" value="UniProtKB"/>
</dbReference>
<dbReference type="GO" id="GO:0031901">
    <property type="term" value="C:early endosome membrane"/>
    <property type="evidence" value="ECO:0007669"/>
    <property type="project" value="UniProtKB-SubCell"/>
</dbReference>
<dbReference type="GO" id="GO:0005768">
    <property type="term" value="C:endosome"/>
    <property type="evidence" value="ECO:0000266"/>
    <property type="project" value="RGD"/>
</dbReference>
<dbReference type="GO" id="GO:0010008">
    <property type="term" value="C:endosome membrane"/>
    <property type="evidence" value="ECO:0000318"/>
    <property type="project" value="GO_Central"/>
</dbReference>
<dbReference type="GO" id="GO:1903561">
    <property type="term" value="C:extracellular vesicle"/>
    <property type="evidence" value="ECO:0000266"/>
    <property type="project" value="RGD"/>
</dbReference>
<dbReference type="GO" id="GO:0005770">
    <property type="term" value="C:late endosome"/>
    <property type="evidence" value="ECO:0000266"/>
    <property type="project" value="RGD"/>
</dbReference>
<dbReference type="GO" id="GO:0031902">
    <property type="term" value="C:late endosome membrane"/>
    <property type="evidence" value="ECO:0000314"/>
    <property type="project" value="RGD"/>
</dbReference>
<dbReference type="GO" id="GO:0005765">
    <property type="term" value="C:lysosomal membrane"/>
    <property type="evidence" value="ECO:0000314"/>
    <property type="project" value="RGD"/>
</dbReference>
<dbReference type="GO" id="GO:0005741">
    <property type="term" value="C:mitochondrial outer membrane"/>
    <property type="evidence" value="ECO:0007669"/>
    <property type="project" value="UniProtKB-SubCell"/>
</dbReference>
<dbReference type="GO" id="GO:0005634">
    <property type="term" value="C:nucleus"/>
    <property type="evidence" value="ECO:0000266"/>
    <property type="project" value="RGD"/>
</dbReference>
<dbReference type="GO" id="GO:0070826">
    <property type="term" value="C:paraferritin complex"/>
    <property type="evidence" value="ECO:0000266"/>
    <property type="project" value="RGD"/>
</dbReference>
<dbReference type="GO" id="GO:0048471">
    <property type="term" value="C:perinuclear region of cytoplasm"/>
    <property type="evidence" value="ECO:0000266"/>
    <property type="project" value="RGD"/>
</dbReference>
<dbReference type="GO" id="GO:0005886">
    <property type="term" value="C:plasma membrane"/>
    <property type="evidence" value="ECO:0000250"/>
    <property type="project" value="UniProtKB"/>
</dbReference>
<dbReference type="GO" id="GO:0055037">
    <property type="term" value="C:recycling endosome"/>
    <property type="evidence" value="ECO:0000266"/>
    <property type="project" value="RGD"/>
</dbReference>
<dbReference type="GO" id="GO:0055038">
    <property type="term" value="C:recycling endosome membrane"/>
    <property type="evidence" value="ECO:0007669"/>
    <property type="project" value="UniProtKB-SubCell"/>
</dbReference>
<dbReference type="GO" id="GO:0005802">
    <property type="term" value="C:trans-Golgi network"/>
    <property type="evidence" value="ECO:0000266"/>
    <property type="project" value="RGD"/>
</dbReference>
<dbReference type="GO" id="GO:0005773">
    <property type="term" value="C:vacuole"/>
    <property type="evidence" value="ECO:0000266"/>
    <property type="project" value="RGD"/>
</dbReference>
<dbReference type="GO" id="GO:0046870">
    <property type="term" value="F:cadmium ion binding"/>
    <property type="evidence" value="ECO:0000314"/>
    <property type="project" value="RGD"/>
</dbReference>
<dbReference type="GO" id="GO:0015086">
    <property type="term" value="F:cadmium ion transmembrane transporter activity"/>
    <property type="evidence" value="ECO:0000314"/>
    <property type="project" value="RGD"/>
</dbReference>
<dbReference type="GO" id="GO:0050897">
    <property type="term" value="F:cobalt ion binding"/>
    <property type="evidence" value="ECO:0000314"/>
    <property type="project" value="RGD"/>
</dbReference>
<dbReference type="GO" id="GO:0015087">
    <property type="term" value="F:cobalt ion transmembrane transporter activity"/>
    <property type="evidence" value="ECO:0000314"/>
    <property type="project" value="RGD"/>
</dbReference>
<dbReference type="GO" id="GO:0005507">
    <property type="term" value="F:copper ion binding"/>
    <property type="evidence" value="ECO:0000314"/>
    <property type="project" value="RGD"/>
</dbReference>
<dbReference type="GO" id="GO:0005375">
    <property type="term" value="F:copper ion transmembrane transporter activity"/>
    <property type="evidence" value="ECO:0000314"/>
    <property type="project" value="RGD"/>
</dbReference>
<dbReference type="GO" id="GO:0015093">
    <property type="term" value="F:ferrous iron transmembrane transporter activity"/>
    <property type="evidence" value="ECO:0000315"/>
    <property type="project" value="RGD"/>
</dbReference>
<dbReference type="GO" id="GO:0022890">
    <property type="term" value="F:inorganic cation transmembrane transporter activity"/>
    <property type="evidence" value="ECO:0000266"/>
    <property type="project" value="RGD"/>
</dbReference>
<dbReference type="GO" id="GO:0005506">
    <property type="term" value="F:iron ion binding"/>
    <property type="evidence" value="ECO:0000314"/>
    <property type="project" value="RGD"/>
</dbReference>
<dbReference type="GO" id="GO:0005381">
    <property type="term" value="F:iron ion transmembrane transporter activity"/>
    <property type="evidence" value="ECO:0000314"/>
    <property type="project" value="RGD"/>
</dbReference>
<dbReference type="GO" id="GO:0015094">
    <property type="term" value="F:lead ion transmembrane transporter activity"/>
    <property type="evidence" value="ECO:0000314"/>
    <property type="project" value="RGD"/>
</dbReference>
<dbReference type="GO" id="GO:0030145">
    <property type="term" value="F:manganese ion binding"/>
    <property type="evidence" value="ECO:0000314"/>
    <property type="project" value="RGD"/>
</dbReference>
<dbReference type="GO" id="GO:0005384">
    <property type="term" value="F:manganese ion transmembrane transporter activity"/>
    <property type="evidence" value="ECO:0000314"/>
    <property type="project" value="RGD"/>
</dbReference>
<dbReference type="GO" id="GO:0016151">
    <property type="term" value="F:nickel cation binding"/>
    <property type="evidence" value="ECO:0000314"/>
    <property type="project" value="RGD"/>
</dbReference>
<dbReference type="GO" id="GO:0015099">
    <property type="term" value="F:nickel cation transmembrane transporter activity"/>
    <property type="evidence" value="ECO:0000314"/>
    <property type="project" value="RGD"/>
</dbReference>
<dbReference type="GO" id="GO:0015295">
    <property type="term" value="F:solute:proton symporter activity"/>
    <property type="evidence" value="ECO:0000266"/>
    <property type="project" value="RGD"/>
</dbReference>
<dbReference type="GO" id="GO:0046915">
    <property type="term" value="F:transition metal ion transmembrane transporter activity"/>
    <property type="evidence" value="ECO:0000266"/>
    <property type="project" value="RGD"/>
</dbReference>
<dbReference type="GO" id="GO:0015100">
    <property type="term" value="F:vanadium ion transmembrane transporter activity"/>
    <property type="evidence" value="ECO:0000266"/>
    <property type="project" value="RGD"/>
</dbReference>
<dbReference type="GO" id="GO:0008270">
    <property type="term" value="F:zinc ion binding"/>
    <property type="evidence" value="ECO:0000314"/>
    <property type="project" value="RGD"/>
</dbReference>
<dbReference type="GO" id="GO:0070574">
    <property type="term" value="P:cadmium ion transmembrane transport"/>
    <property type="evidence" value="ECO:0000266"/>
    <property type="project" value="RGD"/>
</dbReference>
<dbReference type="GO" id="GO:0071456">
    <property type="term" value="P:cellular response to hypoxia"/>
    <property type="evidence" value="ECO:0000270"/>
    <property type="project" value="RGD"/>
</dbReference>
<dbReference type="GO" id="GO:0071281">
    <property type="term" value="P:cellular response to iron ion"/>
    <property type="evidence" value="ECO:0000270"/>
    <property type="project" value="RGD"/>
</dbReference>
<dbReference type="GO" id="GO:0071356">
    <property type="term" value="P:cellular response to tumor necrosis factor"/>
    <property type="evidence" value="ECO:0000270"/>
    <property type="project" value="RGD"/>
</dbReference>
<dbReference type="GO" id="GO:0006824">
    <property type="term" value="P:cobalt ion transport"/>
    <property type="evidence" value="ECO:0000266"/>
    <property type="project" value="RGD"/>
</dbReference>
<dbReference type="GO" id="GO:0098705">
    <property type="term" value="P:copper ion import across plasma membrane"/>
    <property type="evidence" value="ECO:0000315"/>
    <property type="project" value="RGD"/>
</dbReference>
<dbReference type="GO" id="GO:0006825">
    <property type="term" value="P:copper ion transport"/>
    <property type="evidence" value="ECO:0000266"/>
    <property type="project" value="RGD"/>
</dbReference>
<dbReference type="GO" id="GO:0048813">
    <property type="term" value="P:dendrite morphogenesis"/>
    <property type="evidence" value="ECO:0000266"/>
    <property type="project" value="RGD"/>
</dbReference>
<dbReference type="GO" id="GO:0048821">
    <property type="term" value="P:erythrocyte development"/>
    <property type="evidence" value="ECO:0000266"/>
    <property type="project" value="RGD"/>
</dbReference>
<dbReference type="GO" id="GO:0051649">
    <property type="term" value="P:establishment of localization in cell"/>
    <property type="evidence" value="ECO:0000266"/>
    <property type="project" value="RGD"/>
</dbReference>
<dbReference type="GO" id="GO:0006783">
    <property type="term" value="P:heme biosynthetic process"/>
    <property type="evidence" value="ECO:0000266"/>
    <property type="project" value="RGD"/>
</dbReference>
<dbReference type="GO" id="GO:0033212">
    <property type="term" value="P:iron import into cell"/>
    <property type="evidence" value="ECO:0000266"/>
    <property type="project" value="RGD"/>
</dbReference>
<dbReference type="GO" id="GO:0034755">
    <property type="term" value="P:iron ion transmembrane transport"/>
    <property type="evidence" value="ECO:0000266"/>
    <property type="project" value="RGD"/>
</dbReference>
<dbReference type="GO" id="GO:0006826">
    <property type="term" value="P:iron ion transport"/>
    <property type="evidence" value="ECO:0000315"/>
    <property type="project" value="RGD"/>
</dbReference>
<dbReference type="GO" id="GO:0015692">
    <property type="term" value="P:lead ion transport"/>
    <property type="evidence" value="ECO:0000266"/>
    <property type="project" value="RGD"/>
</dbReference>
<dbReference type="GO" id="GO:0007611">
    <property type="term" value="P:learning or memory"/>
    <property type="evidence" value="ECO:0000266"/>
    <property type="project" value="RGD"/>
</dbReference>
<dbReference type="GO" id="GO:0006828">
    <property type="term" value="P:manganese ion transport"/>
    <property type="evidence" value="ECO:0000266"/>
    <property type="project" value="RGD"/>
</dbReference>
<dbReference type="GO" id="GO:0060586">
    <property type="term" value="P:multicellular organismal-level iron ion homeostasis"/>
    <property type="evidence" value="ECO:0000266"/>
    <property type="project" value="RGD"/>
</dbReference>
<dbReference type="GO" id="GO:0015675">
    <property type="term" value="P:nickel cation transport"/>
    <property type="evidence" value="ECO:0000266"/>
    <property type="project" value="RGD"/>
</dbReference>
<dbReference type="GO" id="GO:0006779">
    <property type="term" value="P:porphyrin-containing compound biosynthetic process"/>
    <property type="evidence" value="ECO:0000266"/>
    <property type="project" value="RGD"/>
</dbReference>
<dbReference type="GO" id="GO:0006778">
    <property type="term" value="P:porphyrin-containing compound metabolic process"/>
    <property type="evidence" value="ECO:0000266"/>
    <property type="project" value="RGD"/>
</dbReference>
<dbReference type="GO" id="GO:0046686">
    <property type="term" value="P:response to cadmium ion"/>
    <property type="evidence" value="ECO:0000270"/>
    <property type="project" value="RGD"/>
</dbReference>
<dbReference type="GO" id="GO:0001666">
    <property type="term" value="P:response to hypoxia"/>
    <property type="evidence" value="ECO:0000270"/>
    <property type="project" value="RGD"/>
</dbReference>
<dbReference type="GO" id="GO:0010039">
    <property type="term" value="P:response to iron ion"/>
    <property type="evidence" value="ECO:0000270"/>
    <property type="project" value="RGD"/>
</dbReference>
<dbReference type="GO" id="GO:0010288">
    <property type="term" value="P:response to lead ion"/>
    <property type="evidence" value="ECO:0000270"/>
    <property type="project" value="RGD"/>
</dbReference>
<dbReference type="GO" id="GO:0010042">
    <property type="term" value="P:response to manganese ion"/>
    <property type="evidence" value="ECO:0000315"/>
    <property type="project" value="RGD"/>
</dbReference>
<dbReference type="GO" id="GO:0000041">
    <property type="term" value="P:transition metal ion transport"/>
    <property type="evidence" value="ECO:0000314"/>
    <property type="project" value="RGD"/>
</dbReference>
<dbReference type="HAMAP" id="MF_00221">
    <property type="entry name" value="NRAMP"/>
    <property type="match status" value="1"/>
</dbReference>
<dbReference type="InterPro" id="IPR001046">
    <property type="entry name" value="NRAMP_fam"/>
</dbReference>
<dbReference type="NCBIfam" id="TIGR01197">
    <property type="entry name" value="nramp"/>
    <property type="match status" value="1"/>
</dbReference>
<dbReference type="NCBIfam" id="NF037982">
    <property type="entry name" value="Nramp_1"/>
    <property type="match status" value="1"/>
</dbReference>
<dbReference type="PANTHER" id="PTHR11706:SF40">
    <property type="entry name" value="NATURAL RESISTANCE-ASSOCIATED MACROPHAGE PROTEIN 2"/>
    <property type="match status" value="1"/>
</dbReference>
<dbReference type="PANTHER" id="PTHR11706">
    <property type="entry name" value="SOLUTE CARRIER PROTEIN FAMILY 11 MEMBER"/>
    <property type="match status" value="1"/>
</dbReference>
<dbReference type="Pfam" id="PF01566">
    <property type="entry name" value="Nramp"/>
    <property type="match status" value="1"/>
</dbReference>
<dbReference type="PRINTS" id="PR00447">
    <property type="entry name" value="NATRESASSCMP"/>
</dbReference>
<proteinExistence type="evidence at protein level"/>
<sequence>MVLDPEEKIPDDGASGDHGDSASLGAINPAYSNSSLPHSTGDSEEPFTTYFDEKIPIPEEEYSCFSFRKLWAFTGPGFLMSIAYLDPGNIESDLQSGAVAGFKLLWVLLLATIVGLLLQRLAARLGVVTGLHLAEVCHRQYPKVPRIILWLMVELAIIGSDMQEVIGSAIAINLLSAGRVPLYGGVLITIADTFVFLFLDKYGLRKLEAFFGFLITIMALTFGYEYVTVKPSQSQVLRGMFVPSCSGCHTPQVEQAVGIVGAVIMPHNMYLHSALVKSRQVNRANKQEVREANKYFFIESCIALFVSFIINVFVVSVFAEAFFEKTNEQVVEVCRNSSSPHADLFPNDNSTLAVDIYKGGVVLGCYFGPAALYIWAVGILAAGQSSTMTGTYSGQFVMEGFLNLKWSRFARVILTRSIAIIPTLLVAVFQDVEHLTGMNDFLNVLQSLQLPFALIPILTFTSLRPVMSEFSNGIGWRIAGGILVLLVCSINMYFVVVYVQELGHVALYVVAAVVSVAYLGFVFYLGWQCLIALGLSFLDCGRSYHLGLTARPEIYLLNTVDAVSLVSR</sequence>
<keyword id="KW-0025">Alternative splicing</keyword>
<keyword id="KW-1003">Cell membrane</keyword>
<keyword id="KW-0225">Disease variant</keyword>
<keyword id="KW-0967">Endosome</keyword>
<keyword id="KW-0325">Glycoprotein</keyword>
<keyword id="KW-0333">Golgi apparatus</keyword>
<keyword id="KW-0406">Ion transport</keyword>
<keyword id="KW-0408">Iron</keyword>
<keyword id="KW-0410">Iron transport</keyword>
<keyword id="KW-0458">Lysosome</keyword>
<keyword id="KW-0472">Membrane</keyword>
<keyword id="KW-0496">Mitochondrion</keyword>
<keyword id="KW-1000">Mitochondrion outer membrane</keyword>
<keyword id="KW-0597">Phosphoprotein</keyword>
<keyword id="KW-1185">Reference proteome</keyword>
<keyword id="KW-0769">Symport</keyword>
<keyword id="KW-0812">Transmembrane</keyword>
<keyword id="KW-1133">Transmembrane helix</keyword>
<keyword id="KW-0813">Transport</keyword>
<keyword id="KW-0832">Ubl conjugation</keyword>
<name>NRAM2_RAT</name>
<accession>O54902</accession>
<accession>O35172</accession>
<organism>
    <name type="scientific">Rattus norvegicus</name>
    <name type="common">Rat</name>
    <dbReference type="NCBI Taxonomy" id="10116"/>
    <lineage>
        <taxon>Eukaryota</taxon>
        <taxon>Metazoa</taxon>
        <taxon>Chordata</taxon>
        <taxon>Craniata</taxon>
        <taxon>Vertebrata</taxon>
        <taxon>Euteleostomi</taxon>
        <taxon>Mammalia</taxon>
        <taxon>Eutheria</taxon>
        <taxon>Euarchontoglires</taxon>
        <taxon>Glires</taxon>
        <taxon>Rodentia</taxon>
        <taxon>Myomorpha</taxon>
        <taxon>Muroidea</taxon>
        <taxon>Muridae</taxon>
        <taxon>Murinae</taxon>
        <taxon>Rattus</taxon>
    </lineage>
</organism>
<comment type="function">
    <text evidence="1 2 5 7 8">Proton-coupled metal ion symporter operating with a proton to metal ion stoichiometry of 1:1 (PubMed:16091957, PubMed:9242408). Selectively transports various divalent metal cations, in decreasing affinity: Cd(2+) &gt; Fe(2+) &gt; Co(2+), Mn(2+) &gt;&gt; Zn(2+), Ni(2+), VO(2+) (By similarity) (PubMed:16091957, PubMed:29317744, PubMed:9242408). Essential for maintenance of iron homeostasis by modulating intestinal absorption of dietary Fe(2+) and TF-associated endosomal Fe(2+) transport in erythroid precursors and other cells (By similarity) (PubMed:9242408). Enables Fe(2+) and Mn(2+) ion entry into mitochondria, and is thus expected to promote mitochondrial heme synthesis, iron-sulfur cluster biogenesis and antioxidant defense (PubMed:29317744). Can mediate uncoupled fluxes of either protons or metal ions.</text>
</comment>
<comment type="catalytic activity">
    <molecule>Isoform 2</molecule>
    <reaction evidence="5 7 8">
        <text>Fe(2+)(in) + H(+)(in) = Fe(2+)(out) + H(+)(out)</text>
        <dbReference type="Rhea" id="RHEA:29579"/>
        <dbReference type="ChEBI" id="CHEBI:15378"/>
        <dbReference type="ChEBI" id="CHEBI:29033"/>
    </reaction>
    <physiologicalReaction direction="left-to-right" evidence="13">
        <dbReference type="Rhea" id="RHEA:29580"/>
    </physiologicalReaction>
    <physiologicalReaction direction="right-to-left" evidence="12 14">
        <dbReference type="Rhea" id="RHEA:29581"/>
    </physiologicalReaction>
</comment>
<comment type="catalytic activity">
    <molecule>Isoform 2</molecule>
    <reaction evidence="8">
        <text>Cd(2+)(out) + H(+)(out) = Cd(2+)(in) + H(+)(in)</text>
        <dbReference type="Rhea" id="RHEA:73031"/>
        <dbReference type="ChEBI" id="CHEBI:15378"/>
        <dbReference type="ChEBI" id="CHEBI:48775"/>
    </reaction>
    <physiologicalReaction direction="left-to-right" evidence="14">
        <dbReference type="Rhea" id="RHEA:73032"/>
    </physiologicalReaction>
</comment>
<comment type="catalytic activity">
    <molecule>Isoform 2</molecule>
    <reaction evidence="8">
        <text>Co(2+)(out) + H(+)(out) = Co(2+)(in) + H(+)(in)</text>
        <dbReference type="Rhea" id="RHEA:73035"/>
        <dbReference type="ChEBI" id="CHEBI:15378"/>
        <dbReference type="ChEBI" id="CHEBI:48828"/>
    </reaction>
    <physiologicalReaction direction="left-to-right" evidence="14">
        <dbReference type="Rhea" id="RHEA:73036"/>
    </physiologicalReaction>
</comment>
<comment type="catalytic activity">
    <molecule>Isoform 2</molecule>
    <reaction evidence="7 8">
        <text>Mn(2+)(in) + H(+)(in) = Mn(2+)(out) + H(+)(out)</text>
        <dbReference type="Rhea" id="RHEA:29007"/>
        <dbReference type="ChEBI" id="CHEBI:15378"/>
        <dbReference type="ChEBI" id="CHEBI:29035"/>
    </reaction>
    <physiologicalReaction direction="left-to-right" evidence="13">
        <dbReference type="Rhea" id="RHEA:29008"/>
    </physiologicalReaction>
    <physiologicalReaction direction="right-to-left" evidence="14">
        <dbReference type="Rhea" id="RHEA:29009"/>
    </physiologicalReaction>
</comment>
<comment type="catalytic activity">
    <molecule>Isoform 2</molecule>
    <reaction evidence="5 8">
        <text>Zn(2+)(out) + H(+)(out) = Zn(2+)(in) + H(+)(in)</text>
        <dbReference type="Rhea" id="RHEA:71195"/>
        <dbReference type="ChEBI" id="CHEBI:15378"/>
        <dbReference type="ChEBI" id="CHEBI:29105"/>
    </reaction>
    <physiologicalReaction direction="left-to-right" evidence="12 14">
        <dbReference type="Rhea" id="RHEA:71196"/>
    </physiologicalReaction>
</comment>
<comment type="catalytic activity">
    <molecule>Isoform 2</molecule>
    <reaction evidence="8">
        <text>Ni(2+)(out) + H(+)(out) = Ni(2+)(in) + H(+)(in)</text>
        <dbReference type="Rhea" id="RHEA:73039"/>
        <dbReference type="ChEBI" id="CHEBI:15378"/>
        <dbReference type="ChEBI" id="CHEBI:49786"/>
    </reaction>
    <physiologicalReaction direction="left-to-right" evidence="14">
        <dbReference type="Rhea" id="RHEA:73040"/>
    </physiologicalReaction>
</comment>
<comment type="catalytic activity">
    <molecule>Isoform 2</molecule>
    <reaction evidence="5 8">
        <text>H(+)(in) = H(+)(out)</text>
        <dbReference type="Rhea" id="RHEA:34979"/>
        <dbReference type="ChEBI" id="CHEBI:15378"/>
    </reaction>
</comment>
<comment type="catalytic activity">
    <molecule>Isoform 2</molecule>
    <reaction evidence="5">
        <text>Fe(2+)(in) = Fe(2+)(out)</text>
        <dbReference type="Rhea" id="RHEA:28486"/>
        <dbReference type="ChEBI" id="CHEBI:29033"/>
    </reaction>
</comment>
<comment type="activity regulation">
    <text evidence="7">Inhibited by 2-(3-carbamimidoylsulfanylmethyl-benzyl)-isothiourea.</text>
</comment>
<comment type="biophysicochemical properties">
    <molecule>Isoform 2</molecule>
    <kinetics>
        <KM evidence="5">0.9 uM for Fe(2+)</KM>
        <KM evidence="5">1.4 uM for H(+)</KM>
        <KM evidence="7">1.3 uM for Fe(2+)</KM>
    </kinetics>
</comment>
<comment type="subunit">
    <text evidence="1 2">Forms a complex with NDFIP1 and NEDD4L, in cortical neurons, in response to iron and cobalt exposure; this interaction leads to SLC11A2 ubiquitination by NEDD4L and proteasome-dependent degradation (By similarity). Interacts with NDFIP1, NDFIP2 and WWP2; this interaction leads to SLC11A2 ubiquitination by WWP2 and subsequent proteasome-dependent degradation (By similarity). Interacts with COX2 and TOM6 at the outer mitochondrion membrane. Interacts with ARRDC1; this interaction regulates the incorporation of SLC11A2 into extracellular vesicles through an ubiquitination-dependent mechanism (By similarity). Interacts with ARRDC4; controls the incorporation of SLC11A2 into extracellular vesicles through an ubiquitination-dependent mechanism (By similarity).</text>
</comment>
<comment type="subcellular location">
    <subcellularLocation>
        <location evidence="2">Golgi apparatus</location>
        <location evidence="2">trans-Golgi network membrane</location>
        <topology evidence="3">Multi-pass membrane protein</topology>
    </subcellularLocation>
    <subcellularLocation>
        <location evidence="1">Early endosome membrane</location>
        <topology evidence="3">Multi-pass membrane protein</topology>
    </subcellularLocation>
    <subcellularLocation>
        <location evidence="2">Recycling endosome membrane</location>
        <topology evidence="3">Multi-pass membrane protein</topology>
    </subcellularLocation>
    <subcellularLocation>
        <location evidence="1">Late endosome membrane</location>
        <topology evidence="3">Multi-pass membrane protein</topology>
    </subcellularLocation>
    <subcellularLocation>
        <location evidence="1">Lysosome membrane</location>
        <topology evidence="3">Multi-pass membrane protein</topology>
    </subcellularLocation>
    <subcellularLocation>
        <location evidence="1">Apical cell membrane</location>
        <topology evidence="3">Multi-pass membrane protein</topology>
    </subcellularLocation>
    <subcellularLocation>
        <location evidence="6">Mitochondrion outer membrane</location>
        <topology evidence="3">Multi-pass membrane protein</topology>
    </subcellularLocation>
    <subcellularLocation>
        <location evidence="1">Extracellular vesicle membrane</location>
        <topology evidence="1">Multi-pass membrane protein</topology>
    </subcellularLocation>
</comment>
<comment type="alternative products">
    <event type="alternative splicing"/>
    <isoform>
        <id>O54902-1</id>
        <name>2</name>
        <name>Non-IRE</name>
        <sequence type="displayed"/>
    </isoform>
    <isoform>
        <id>O54902-2</id>
        <name>1</name>
        <name>IRE</name>
        <sequence type="described" ref="VSP_003597"/>
    </isoform>
</comment>
<comment type="tissue specificity">
    <text evidence="8">Ubiquitous.</text>
</comment>
<comment type="tissue specificity">
    <molecule>Isoform 2</molecule>
    <text evidence="8">Expressed in proximal intestine, kidney and brain.</text>
</comment>
<comment type="induction">
    <molecule>Isoform 2</molecule>
    <text evidence="8">Up-regulated under iron-depletion conditions.</text>
</comment>
<comment type="PTM">
    <text evidence="2">Ubiquitinated by WWP2.</text>
</comment>
<comment type="PTM">
    <text evidence="1">N-glycosylated.</text>
</comment>
<comment type="disease">
    <text>Defects in Slc11a2 are the cause of microcytic anemia (Belgrade or b). Homozygous b/b rats have hypochromic microcytic anemia due to severe defects in intestinal iron absorption and erythroid iron utilization.</text>
</comment>
<comment type="similarity">
    <text evidence="11">Belongs to the NRAMP family.</text>
</comment>
<comment type="caution">
    <text evidence="1 8">The capacity to transport copper ions remains controversial.</text>
</comment>